<organism>
    <name type="scientific">Trypanosoma brucei rhodesiense</name>
    <dbReference type="NCBI Taxonomy" id="31286"/>
    <lineage>
        <taxon>Eukaryota</taxon>
        <taxon>Discoba</taxon>
        <taxon>Euglenozoa</taxon>
        <taxon>Kinetoplastea</taxon>
        <taxon>Metakinetoplastina</taxon>
        <taxon>Trypanosomatida</taxon>
        <taxon>Trypanosomatidae</taxon>
        <taxon>Trypanosoma</taxon>
    </lineage>
</organism>
<reference key="1">
    <citation type="journal article" date="1990" name="Biochem. Biophys. Res. Commun.">
        <title>Sequences of three VSG mRNAs expressed in a mixed population of Trypanosoma brucei rhodesiense.</title>
        <authorList>
            <person name="Reddy L.V."/>
            <person name="Hall T."/>
            <person name="Donelson J.E."/>
        </authorList>
    </citation>
    <scope>NUCLEOTIDE SEQUENCE [MRNA]</scope>
    <source>
        <strain>WRATat 1</strain>
    </source>
</reference>
<name>VSWB_TRYBR</name>
<evidence type="ECO:0000250" key="1"/>
<evidence type="ECO:0000255" key="2"/>
<evidence type="ECO:0000256" key="3">
    <source>
        <dbReference type="SAM" id="MobiDB-lite"/>
    </source>
</evidence>
<accession>P20947</accession>
<comment type="function">
    <text>VSG forms a coat on the surface of the parasite. The trypanosome evades the immune response of the host by expressing a series of antigenically distinct VSGs from an estimated 1000 VSG genes.</text>
</comment>
<comment type="subcellular location">
    <subcellularLocation>
        <location>Cell membrane</location>
        <topology>Lipid-anchor</topology>
        <topology>GPI-anchor</topology>
    </subcellularLocation>
    <text evidence="1">A soluble form is released from ruptured cells by the action of a PI-PLC.</text>
</comment>
<keyword id="KW-1003">Cell membrane</keyword>
<keyword id="KW-0325">Glycoprotein</keyword>
<keyword id="KW-0336">GPI-anchor</keyword>
<keyword id="KW-0449">Lipoprotein</keyword>
<keyword id="KW-0472">Membrane</keyword>
<keyword id="KW-0732">Signal</keyword>
<keyword id="KW-0821">Trypanosomiasis</keyword>
<protein>
    <recommendedName>
        <fullName>Variant surface glycoprotein WRATAT B</fullName>
        <shortName>VSG</shortName>
    </recommendedName>
</protein>
<sequence length="487" mass="52724">MWIILALLTLAGSRVAHGAGKNVNGVEFNLFCHIANMLNAEKIEDDKTDGLDRQAAEAWTAIDSIFTVTANESYYSEGPASAANTTDENQDAKPERVAKWVQKRNQIDKIAAPGNEKNGKYARRPRDRMSAATGAKLDTVFTLASEARVRLMQIDTEIATNKQEIRQQLGLHCSEGQGKGQSRNQHPDNAAFASDYSTACKGSTGPGKSLANDLVCICSTDTSQAQSTLQMCTSIDDANSLFSTLHKRSQCQGDFPCPHRVCAKTAETSELTETNINNCVTAFTATLGRHTKSSATNEGAYVFGSGQNSGDECNGGAATGQSCVSYHDLITAKSGTTLSGAITRLKQLQIAKAKLKARRLLLQNRERQQTRLMALADKMQELYQEALHDEVQLRKEAQNKPQETPDSDKQKACEKYHNKSKECKENGCQWSGTEETIGKCEAKPKAGTEAATTGPGERDAGATANTTGSSNSFVIKTSPLLFAFLLF</sequence>
<proteinExistence type="evidence at transcript level"/>
<dbReference type="EMBL" id="M33824">
    <property type="protein sequence ID" value="AAA30317.1"/>
    <property type="molecule type" value="mRNA"/>
</dbReference>
<dbReference type="PIR" id="B35480">
    <property type="entry name" value="B35480"/>
</dbReference>
<dbReference type="SMR" id="P20947"/>
<dbReference type="GO" id="GO:0005886">
    <property type="term" value="C:plasma membrane"/>
    <property type="evidence" value="ECO:0007669"/>
    <property type="project" value="UniProtKB-SubCell"/>
</dbReference>
<dbReference type="GO" id="GO:0098552">
    <property type="term" value="C:side of membrane"/>
    <property type="evidence" value="ECO:0007669"/>
    <property type="project" value="UniProtKB-KW"/>
</dbReference>
<dbReference type="InterPro" id="IPR025932">
    <property type="entry name" value="Trypano_VSG_B_N_dom"/>
</dbReference>
<dbReference type="InterPro" id="IPR027446">
    <property type="entry name" value="VSG_C_dom_sf"/>
</dbReference>
<dbReference type="Pfam" id="PF13206">
    <property type="entry name" value="VSG_B"/>
    <property type="match status" value="1"/>
</dbReference>
<dbReference type="SUPFAM" id="SSF118251">
    <property type="entry name" value="Variant surface glycoprotein MITAT 1.2, VSG 221, C-terminal domain"/>
    <property type="match status" value="1"/>
</dbReference>
<feature type="signal peptide" evidence="2">
    <location>
        <begin position="1"/>
        <end position="19"/>
    </location>
</feature>
<feature type="chain" id="PRO_0000036449" description="Variant surface glycoprotein WRATAT B">
    <location>
        <begin position="20"/>
        <end position="470"/>
    </location>
</feature>
<feature type="propeptide" id="PRO_0000036450" description="Removed in mature form" evidence="2">
    <location>
        <begin position="471"/>
        <end position="487"/>
    </location>
</feature>
<feature type="region of interest" description="Disordered" evidence="3">
    <location>
        <begin position="443"/>
        <end position="468"/>
    </location>
</feature>
<feature type="lipid moiety-binding region" description="GPI-anchor amidated serine" evidence="2">
    <location>
        <position position="470"/>
    </location>
</feature>
<feature type="glycosylation site" description="N-linked (GlcNAc...) asparagine" evidence="2">
    <location>
        <position position="71"/>
    </location>
</feature>
<feature type="glycosylation site" description="N-linked (GlcNAc...) asparagine" evidence="2">
    <location>
        <position position="84"/>
    </location>
</feature>
<feature type="glycosylation site" description="N-linked (GlcNAc...) asparagine" evidence="2">
    <location>
        <position position="418"/>
    </location>
</feature>
<feature type="glycosylation site" description="N-linked (GlcNAc...) asparagine" evidence="2">
    <location>
        <position position="465"/>
    </location>
</feature>